<gene>
    <name type="primary">Pno1</name>
</gene>
<dbReference type="EMBL" id="AF349950">
    <property type="protein sequence ID" value="AAK29665.1"/>
    <property type="molecule type" value="mRNA"/>
</dbReference>
<dbReference type="EMBL" id="AK007324">
    <property type="protein sequence ID" value="BAB24959.1"/>
    <property type="molecule type" value="mRNA"/>
</dbReference>
<dbReference type="EMBL" id="AK009146">
    <property type="protein sequence ID" value="BAB26104.1"/>
    <property type="molecule type" value="mRNA"/>
</dbReference>
<dbReference type="EMBL" id="AK146152">
    <property type="protein sequence ID" value="BAE26936.1"/>
    <property type="molecule type" value="mRNA"/>
</dbReference>
<dbReference type="EMBL" id="AK165942">
    <property type="protein sequence ID" value="BAE38474.1"/>
    <property type="molecule type" value="mRNA"/>
</dbReference>
<dbReference type="EMBL" id="AK168177">
    <property type="protein sequence ID" value="BAE40137.1"/>
    <property type="molecule type" value="mRNA"/>
</dbReference>
<dbReference type="EMBL" id="AL713926">
    <property type="status" value="NOT_ANNOTATED_CDS"/>
    <property type="molecule type" value="Genomic_DNA"/>
</dbReference>
<dbReference type="EMBL" id="BC020037">
    <property type="protein sequence ID" value="AAH20037.1"/>
    <property type="molecule type" value="mRNA"/>
</dbReference>
<dbReference type="CCDS" id="CCDS24449.1"/>
<dbReference type="RefSeq" id="NP_079719.1">
    <property type="nucleotide sequence ID" value="NM_025443.2"/>
</dbReference>
<dbReference type="SMR" id="Q9CPS7"/>
<dbReference type="BioGRID" id="211326">
    <property type="interactions" value="1"/>
</dbReference>
<dbReference type="FunCoup" id="Q9CPS7">
    <property type="interactions" value="2125"/>
</dbReference>
<dbReference type="IntAct" id="Q9CPS7">
    <property type="interactions" value="1"/>
</dbReference>
<dbReference type="MINT" id="Q9CPS7"/>
<dbReference type="STRING" id="10090.ENSMUSP00000020317"/>
<dbReference type="GlyGen" id="Q9CPS7">
    <property type="glycosylation" value="1 site, 1 N-linked glycan (1 site)"/>
</dbReference>
<dbReference type="iPTMnet" id="Q9CPS7"/>
<dbReference type="PhosphoSitePlus" id="Q9CPS7"/>
<dbReference type="PaxDb" id="10090-ENSMUSP00000020317"/>
<dbReference type="PeptideAtlas" id="Q9CPS7"/>
<dbReference type="ProteomicsDB" id="289639"/>
<dbReference type="Pumba" id="Q9CPS7"/>
<dbReference type="Antibodypedia" id="30913">
    <property type="antibodies" value="86 antibodies from 18 providers"/>
</dbReference>
<dbReference type="DNASU" id="66249"/>
<dbReference type="Ensembl" id="ENSMUST00000020317.8">
    <property type="protein sequence ID" value="ENSMUSP00000020317.8"/>
    <property type="gene ID" value="ENSMUSG00000020116.8"/>
</dbReference>
<dbReference type="GeneID" id="66249"/>
<dbReference type="KEGG" id="mmu:66249"/>
<dbReference type="UCSC" id="uc007icc.1">
    <property type="organism name" value="mouse"/>
</dbReference>
<dbReference type="AGR" id="MGI:1913499"/>
<dbReference type="CTD" id="56902"/>
<dbReference type="MGI" id="MGI:1913499">
    <property type="gene designation" value="Pno1"/>
</dbReference>
<dbReference type="VEuPathDB" id="HostDB:ENSMUSG00000020116"/>
<dbReference type="eggNOG" id="KOG3273">
    <property type="taxonomic scope" value="Eukaryota"/>
</dbReference>
<dbReference type="GeneTree" id="ENSGT00390000018052"/>
<dbReference type="HOGENOM" id="CLU_064992_2_0_1"/>
<dbReference type="InParanoid" id="Q9CPS7"/>
<dbReference type="OMA" id="TPLRNNW"/>
<dbReference type="OrthoDB" id="1932641at2759"/>
<dbReference type="PhylomeDB" id="Q9CPS7"/>
<dbReference type="TreeFam" id="TF300114"/>
<dbReference type="Reactome" id="R-MMU-6791226">
    <property type="pathway name" value="Major pathway of rRNA processing in the nucleolus and cytosol"/>
</dbReference>
<dbReference type="BioGRID-ORCS" id="66249">
    <property type="hits" value="26 hits in 83 CRISPR screens"/>
</dbReference>
<dbReference type="PRO" id="PR:Q9CPS7"/>
<dbReference type="Proteomes" id="UP000000589">
    <property type="component" value="Chromosome 11"/>
</dbReference>
<dbReference type="RNAct" id="Q9CPS7">
    <property type="molecule type" value="protein"/>
</dbReference>
<dbReference type="Bgee" id="ENSMUSG00000020116">
    <property type="expression patterns" value="Expressed in cleaving embryo and 280 other cell types or tissues"/>
</dbReference>
<dbReference type="GO" id="GO:0005730">
    <property type="term" value="C:nucleolus"/>
    <property type="evidence" value="ECO:0000250"/>
    <property type="project" value="UniProtKB"/>
</dbReference>
<dbReference type="GO" id="GO:0005654">
    <property type="term" value="C:nucleoplasm"/>
    <property type="evidence" value="ECO:0007669"/>
    <property type="project" value="Ensembl"/>
</dbReference>
<dbReference type="GO" id="GO:0032040">
    <property type="term" value="C:small-subunit processome"/>
    <property type="evidence" value="ECO:0000250"/>
    <property type="project" value="UniProtKB"/>
</dbReference>
<dbReference type="GO" id="GO:0003723">
    <property type="term" value="F:RNA binding"/>
    <property type="evidence" value="ECO:0007669"/>
    <property type="project" value="UniProtKB-KW"/>
</dbReference>
<dbReference type="GO" id="GO:0042274">
    <property type="term" value="P:ribosomal small subunit biogenesis"/>
    <property type="evidence" value="ECO:0000250"/>
    <property type="project" value="UniProtKB"/>
</dbReference>
<dbReference type="CDD" id="cd22391">
    <property type="entry name" value="KH-I_PNO1_rpt1"/>
    <property type="match status" value="1"/>
</dbReference>
<dbReference type="CDD" id="cd22392">
    <property type="entry name" value="KH-I_PNO1_rpt2"/>
    <property type="match status" value="1"/>
</dbReference>
<dbReference type="FunFam" id="3.30.1370.10:FF:000009">
    <property type="entry name" value="RNA-binding protein PNO1"/>
    <property type="match status" value="1"/>
</dbReference>
<dbReference type="FunFam" id="3.30.1370.10:FF:000048">
    <property type="entry name" value="RNA-binding protein PNO1 isoform X2"/>
    <property type="match status" value="1"/>
</dbReference>
<dbReference type="Gene3D" id="3.30.1370.10">
    <property type="entry name" value="K Homology domain, type 1"/>
    <property type="match status" value="2"/>
</dbReference>
<dbReference type="InterPro" id="IPR055212">
    <property type="entry name" value="KH-I_PNO1_first"/>
</dbReference>
<dbReference type="InterPro" id="IPR004087">
    <property type="entry name" value="KH_dom"/>
</dbReference>
<dbReference type="InterPro" id="IPR036612">
    <property type="entry name" value="KH_dom_type_1_sf"/>
</dbReference>
<dbReference type="InterPro" id="IPR055211">
    <property type="entry name" value="KH_PNO1_2nd"/>
</dbReference>
<dbReference type="PANTHER" id="PTHR12826">
    <property type="entry name" value="RIBONUCLEASE Y"/>
    <property type="match status" value="1"/>
</dbReference>
<dbReference type="PANTHER" id="PTHR12826:SF13">
    <property type="entry name" value="RNA-BINDING PROTEIN PNO1"/>
    <property type="match status" value="1"/>
</dbReference>
<dbReference type="Pfam" id="PF22891">
    <property type="entry name" value="KH_PNO1_2nd"/>
    <property type="match status" value="1"/>
</dbReference>
<dbReference type="SMART" id="SM00322">
    <property type="entry name" value="KH"/>
    <property type="match status" value="1"/>
</dbReference>
<dbReference type="SUPFAM" id="SSF54791">
    <property type="entry name" value="Eukaryotic type KH-domain (KH-domain type I)"/>
    <property type="match status" value="1"/>
</dbReference>
<sequence>METQSTGTEDGFTPVTHRGGRRAKKRQAEQSSAAGQDGEAGRMDTEEARPAKRPVFPPLSGDQLLTGKEETRKIPVPGNRYTPLKENWMKIFTPIVEHLGLQIRFNLKSRNVEIRTCKDTKDVSALTKAADFVKAFVLGFQVEDALALIRLDDLFLESFEITDVKPLKGDHLSRAIGRIAGKGGKTKFTIENVTRTRIVLADVHVHILGSFQNIKMARTAICNLILGNPPSKVYGNIRAVASRSADRF</sequence>
<organism>
    <name type="scientific">Mus musculus</name>
    <name type="common">Mouse</name>
    <dbReference type="NCBI Taxonomy" id="10090"/>
    <lineage>
        <taxon>Eukaryota</taxon>
        <taxon>Metazoa</taxon>
        <taxon>Chordata</taxon>
        <taxon>Craniata</taxon>
        <taxon>Vertebrata</taxon>
        <taxon>Euteleostomi</taxon>
        <taxon>Mammalia</taxon>
        <taxon>Eutheria</taxon>
        <taxon>Euarchontoglires</taxon>
        <taxon>Glires</taxon>
        <taxon>Rodentia</taxon>
        <taxon>Myomorpha</taxon>
        <taxon>Muroidea</taxon>
        <taxon>Muridae</taxon>
        <taxon>Murinae</taxon>
        <taxon>Mus</taxon>
        <taxon>Mus</taxon>
    </lineage>
</organism>
<name>PNO1_MOUSE</name>
<reference key="1">
    <citation type="journal article" date="2004" name="DNA Seq.">
        <title>Cloning and characterization of a novel human RNA binding protein gene PNO1.</title>
        <authorList>
            <person name="Zhou G.-J."/>
            <person name="Zhang Y."/>
            <person name="Wang J."/>
            <person name="Guo J.H."/>
            <person name="Ni J."/>
            <person name="Zhong Z.-M."/>
            <person name="Wang L.-Q."/>
            <person name="Dang Y.-J."/>
            <person name="Dai J.F."/>
            <person name="Yu L."/>
        </authorList>
    </citation>
    <scope>NUCLEOTIDE SEQUENCE [MRNA]</scope>
    <source>
        <strain>C57BL/6 X DBA</strain>
    </source>
</reference>
<reference key="2">
    <citation type="journal article" date="2005" name="Science">
        <title>The transcriptional landscape of the mammalian genome.</title>
        <authorList>
            <person name="Carninci P."/>
            <person name="Kasukawa T."/>
            <person name="Katayama S."/>
            <person name="Gough J."/>
            <person name="Frith M.C."/>
            <person name="Maeda N."/>
            <person name="Oyama R."/>
            <person name="Ravasi T."/>
            <person name="Lenhard B."/>
            <person name="Wells C."/>
            <person name="Kodzius R."/>
            <person name="Shimokawa K."/>
            <person name="Bajic V.B."/>
            <person name="Brenner S.E."/>
            <person name="Batalov S."/>
            <person name="Forrest A.R."/>
            <person name="Zavolan M."/>
            <person name="Davis M.J."/>
            <person name="Wilming L.G."/>
            <person name="Aidinis V."/>
            <person name="Allen J.E."/>
            <person name="Ambesi-Impiombato A."/>
            <person name="Apweiler R."/>
            <person name="Aturaliya R.N."/>
            <person name="Bailey T.L."/>
            <person name="Bansal M."/>
            <person name="Baxter L."/>
            <person name="Beisel K.W."/>
            <person name="Bersano T."/>
            <person name="Bono H."/>
            <person name="Chalk A.M."/>
            <person name="Chiu K.P."/>
            <person name="Choudhary V."/>
            <person name="Christoffels A."/>
            <person name="Clutterbuck D.R."/>
            <person name="Crowe M.L."/>
            <person name="Dalla E."/>
            <person name="Dalrymple B.P."/>
            <person name="de Bono B."/>
            <person name="Della Gatta G."/>
            <person name="di Bernardo D."/>
            <person name="Down T."/>
            <person name="Engstrom P."/>
            <person name="Fagiolini M."/>
            <person name="Faulkner G."/>
            <person name="Fletcher C.F."/>
            <person name="Fukushima T."/>
            <person name="Furuno M."/>
            <person name="Futaki S."/>
            <person name="Gariboldi M."/>
            <person name="Georgii-Hemming P."/>
            <person name="Gingeras T.R."/>
            <person name="Gojobori T."/>
            <person name="Green R.E."/>
            <person name="Gustincich S."/>
            <person name="Harbers M."/>
            <person name="Hayashi Y."/>
            <person name="Hensch T.K."/>
            <person name="Hirokawa N."/>
            <person name="Hill D."/>
            <person name="Huminiecki L."/>
            <person name="Iacono M."/>
            <person name="Ikeo K."/>
            <person name="Iwama A."/>
            <person name="Ishikawa T."/>
            <person name="Jakt M."/>
            <person name="Kanapin A."/>
            <person name="Katoh M."/>
            <person name="Kawasawa Y."/>
            <person name="Kelso J."/>
            <person name="Kitamura H."/>
            <person name="Kitano H."/>
            <person name="Kollias G."/>
            <person name="Krishnan S.P."/>
            <person name="Kruger A."/>
            <person name="Kummerfeld S.K."/>
            <person name="Kurochkin I.V."/>
            <person name="Lareau L.F."/>
            <person name="Lazarevic D."/>
            <person name="Lipovich L."/>
            <person name="Liu J."/>
            <person name="Liuni S."/>
            <person name="McWilliam S."/>
            <person name="Madan Babu M."/>
            <person name="Madera M."/>
            <person name="Marchionni L."/>
            <person name="Matsuda H."/>
            <person name="Matsuzawa S."/>
            <person name="Miki H."/>
            <person name="Mignone F."/>
            <person name="Miyake S."/>
            <person name="Morris K."/>
            <person name="Mottagui-Tabar S."/>
            <person name="Mulder N."/>
            <person name="Nakano N."/>
            <person name="Nakauchi H."/>
            <person name="Ng P."/>
            <person name="Nilsson R."/>
            <person name="Nishiguchi S."/>
            <person name="Nishikawa S."/>
            <person name="Nori F."/>
            <person name="Ohara O."/>
            <person name="Okazaki Y."/>
            <person name="Orlando V."/>
            <person name="Pang K.C."/>
            <person name="Pavan W.J."/>
            <person name="Pavesi G."/>
            <person name="Pesole G."/>
            <person name="Petrovsky N."/>
            <person name="Piazza S."/>
            <person name="Reed J."/>
            <person name="Reid J.F."/>
            <person name="Ring B.Z."/>
            <person name="Ringwald M."/>
            <person name="Rost B."/>
            <person name="Ruan Y."/>
            <person name="Salzberg S.L."/>
            <person name="Sandelin A."/>
            <person name="Schneider C."/>
            <person name="Schoenbach C."/>
            <person name="Sekiguchi K."/>
            <person name="Semple C.A."/>
            <person name="Seno S."/>
            <person name="Sessa L."/>
            <person name="Sheng Y."/>
            <person name="Shibata Y."/>
            <person name="Shimada H."/>
            <person name="Shimada K."/>
            <person name="Silva D."/>
            <person name="Sinclair B."/>
            <person name="Sperling S."/>
            <person name="Stupka E."/>
            <person name="Sugiura K."/>
            <person name="Sultana R."/>
            <person name="Takenaka Y."/>
            <person name="Taki K."/>
            <person name="Tammoja K."/>
            <person name="Tan S.L."/>
            <person name="Tang S."/>
            <person name="Taylor M.S."/>
            <person name="Tegner J."/>
            <person name="Teichmann S.A."/>
            <person name="Ueda H.R."/>
            <person name="van Nimwegen E."/>
            <person name="Verardo R."/>
            <person name="Wei C.L."/>
            <person name="Yagi K."/>
            <person name="Yamanishi H."/>
            <person name="Zabarovsky E."/>
            <person name="Zhu S."/>
            <person name="Zimmer A."/>
            <person name="Hide W."/>
            <person name="Bult C."/>
            <person name="Grimmond S.M."/>
            <person name="Teasdale R.D."/>
            <person name="Liu E.T."/>
            <person name="Brusic V."/>
            <person name="Quackenbush J."/>
            <person name="Wahlestedt C."/>
            <person name="Mattick J.S."/>
            <person name="Hume D.A."/>
            <person name="Kai C."/>
            <person name="Sasaki D."/>
            <person name="Tomaru Y."/>
            <person name="Fukuda S."/>
            <person name="Kanamori-Katayama M."/>
            <person name="Suzuki M."/>
            <person name="Aoki J."/>
            <person name="Arakawa T."/>
            <person name="Iida J."/>
            <person name="Imamura K."/>
            <person name="Itoh M."/>
            <person name="Kato T."/>
            <person name="Kawaji H."/>
            <person name="Kawagashira N."/>
            <person name="Kawashima T."/>
            <person name="Kojima M."/>
            <person name="Kondo S."/>
            <person name="Konno H."/>
            <person name="Nakano K."/>
            <person name="Ninomiya N."/>
            <person name="Nishio T."/>
            <person name="Okada M."/>
            <person name="Plessy C."/>
            <person name="Shibata K."/>
            <person name="Shiraki T."/>
            <person name="Suzuki S."/>
            <person name="Tagami M."/>
            <person name="Waki K."/>
            <person name="Watahiki A."/>
            <person name="Okamura-Oho Y."/>
            <person name="Suzuki H."/>
            <person name="Kawai J."/>
            <person name="Hayashizaki Y."/>
        </authorList>
    </citation>
    <scope>NUCLEOTIDE SEQUENCE [LARGE SCALE MRNA]</scope>
    <source>
        <strain>C57BL/6J</strain>
        <strain>DBA/2J</strain>
        <tissue>Lung</tissue>
        <tissue>Pancreas</tissue>
        <tissue>Tongue</tissue>
    </source>
</reference>
<reference key="3">
    <citation type="journal article" date="2009" name="PLoS Biol.">
        <title>Lineage-specific biology revealed by a finished genome assembly of the mouse.</title>
        <authorList>
            <person name="Church D.M."/>
            <person name="Goodstadt L."/>
            <person name="Hillier L.W."/>
            <person name="Zody M.C."/>
            <person name="Goldstein S."/>
            <person name="She X."/>
            <person name="Bult C.J."/>
            <person name="Agarwala R."/>
            <person name="Cherry J.L."/>
            <person name="DiCuccio M."/>
            <person name="Hlavina W."/>
            <person name="Kapustin Y."/>
            <person name="Meric P."/>
            <person name="Maglott D."/>
            <person name="Birtle Z."/>
            <person name="Marques A.C."/>
            <person name="Graves T."/>
            <person name="Zhou S."/>
            <person name="Teague B."/>
            <person name="Potamousis K."/>
            <person name="Churas C."/>
            <person name="Place M."/>
            <person name="Herschleb J."/>
            <person name="Runnheim R."/>
            <person name="Forrest D."/>
            <person name="Amos-Landgraf J."/>
            <person name="Schwartz D.C."/>
            <person name="Cheng Z."/>
            <person name="Lindblad-Toh K."/>
            <person name="Eichler E.E."/>
            <person name="Ponting C.P."/>
        </authorList>
    </citation>
    <scope>NUCLEOTIDE SEQUENCE [LARGE SCALE GENOMIC DNA]</scope>
    <source>
        <strain>C57BL/6J</strain>
    </source>
</reference>
<reference key="4">
    <citation type="journal article" date="2004" name="Genome Res.">
        <title>The status, quality, and expansion of the NIH full-length cDNA project: the Mammalian Gene Collection (MGC).</title>
        <authorList>
            <consortium name="The MGC Project Team"/>
        </authorList>
    </citation>
    <scope>NUCLEOTIDE SEQUENCE [LARGE SCALE MRNA]</scope>
    <source>
        <strain>Czech II</strain>
        <tissue>Mammary tumor</tissue>
    </source>
</reference>
<reference key="5">
    <citation type="journal article" date="2010" name="Cell">
        <title>A tissue-specific atlas of mouse protein phosphorylation and expression.</title>
        <authorList>
            <person name="Huttlin E.L."/>
            <person name="Jedrychowski M.P."/>
            <person name="Elias J.E."/>
            <person name="Goswami T."/>
            <person name="Rad R."/>
            <person name="Beausoleil S.A."/>
            <person name="Villen J."/>
            <person name="Haas W."/>
            <person name="Sowa M.E."/>
            <person name="Gygi S.P."/>
        </authorList>
    </citation>
    <scope>IDENTIFICATION BY MASS SPECTROMETRY [LARGE SCALE ANALYSIS]</scope>
    <source>
        <tissue>Spleen</tissue>
    </source>
</reference>
<comment type="function">
    <text evidence="1">Part of the small subunit (SSU) processome, first precursor of the small eukaryotic ribosomal subunit. During the assembly of the SSU processome in the nucleolus, many ribosome biogenesis factors, an RNA chaperone and ribosomal proteins associate with the nascent pre-rRNA and work in concert to generate RNA folding, modifications, rearrangements and cleavage as well as targeted degradation of pre-ribosomal RNA by the RNA exosome. Positively regulates dimethylation of two adjacent adenosines in the loop of a conserved hairpin near the 3'-end of 18S rRNA.</text>
</comment>
<comment type="subunit">
    <text evidence="1">Part of the small subunit (SSU) processome, composed of more than 70 proteins and the RNA chaperone small nucleolar RNA (snoRNA) U3.</text>
</comment>
<comment type="subcellular location">
    <subcellularLocation>
        <location evidence="1">Nucleus</location>
        <location evidence="1">Nucleolus</location>
    </subcellularLocation>
</comment>
<comment type="similarity">
    <text evidence="3">Belongs to the PNO1 family.</text>
</comment>
<evidence type="ECO:0000250" key="1">
    <source>
        <dbReference type="UniProtKB" id="Q9NRX1"/>
    </source>
</evidence>
<evidence type="ECO:0000256" key="2">
    <source>
        <dbReference type="SAM" id="MobiDB-lite"/>
    </source>
</evidence>
<evidence type="ECO:0000305" key="3"/>
<keyword id="KW-0539">Nucleus</keyword>
<keyword id="KW-1185">Reference proteome</keyword>
<keyword id="KW-0694">RNA-binding</keyword>
<protein>
    <recommendedName>
        <fullName>RNA-binding protein PNO1</fullName>
    </recommendedName>
</protein>
<accession>Q9CPS7</accession>
<proteinExistence type="evidence at protein level"/>
<feature type="chain" id="PRO_0000270541" description="RNA-binding protein PNO1">
    <location>
        <begin position="1"/>
        <end position="248"/>
    </location>
</feature>
<feature type="domain" description="KH">
    <location>
        <begin position="169"/>
        <end position="221"/>
    </location>
</feature>
<feature type="region of interest" description="Disordered" evidence="2">
    <location>
        <begin position="1"/>
        <end position="63"/>
    </location>
</feature>
<feature type="compositionally biased region" description="Basic and acidic residues" evidence="2">
    <location>
        <begin position="39"/>
        <end position="50"/>
    </location>
</feature>